<comment type="function">
    <text evidence="1">Binds directly to 16S ribosomal RNA.</text>
</comment>
<comment type="similarity">
    <text evidence="1">Belongs to the bacterial ribosomal protein bS20 family.</text>
</comment>
<evidence type="ECO:0000255" key="1">
    <source>
        <dbReference type="HAMAP-Rule" id="MF_00500"/>
    </source>
</evidence>
<evidence type="ECO:0000305" key="2"/>
<proteinExistence type="inferred from homology"/>
<gene>
    <name evidence="1" type="primary">rpsT</name>
    <name type="ordered locus">BruAb1_2158</name>
</gene>
<sequence length="88" mass="9669">MANTPSAKKAVRKIAARTEINKSRRSRVRTFVRKLEDALLSGDKQAAEVAFKAVEPELMRAASKGVVHKNTAARKVSRLAKRVKALNA</sequence>
<organism>
    <name type="scientific">Brucella abortus biovar 1 (strain 9-941)</name>
    <dbReference type="NCBI Taxonomy" id="262698"/>
    <lineage>
        <taxon>Bacteria</taxon>
        <taxon>Pseudomonadati</taxon>
        <taxon>Pseudomonadota</taxon>
        <taxon>Alphaproteobacteria</taxon>
        <taxon>Hyphomicrobiales</taxon>
        <taxon>Brucellaceae</taxon>
        <taxon>Brucella/Ochrobactrum group</taxon>
        <taxon>Brucella</taxon>
    </lineage>
</organism>
<dbReference type="EMBL" id="AE017223">
    <property type="protein sequence ID" value="AAX75453.1"/>
    <property type="molecule type" value="Genomic_DNA"/>
</dbReference>
<dbReference type="RefSeq" id="WP_002965247.1">
    <property type="nucleotide sequence ID" value="NC_006932.1"/>
</dbReference>
<dbReference type="SMR" id="Q57A81"/>
<dbReference type="EnsemblBacteria" id="AAX75453">
    <property type="protein sequence ID" value="AAX75453"/>
    <property type="gene ID" value="BruAb1_2158"/>
</dbReference>
<dbReference type="GeneID" id="97534562"/>
<dbReference type="KEGG" id="bmb:BruAb1_2158"/>
<dbReference type="HOGENOM" id="CLU_160655_3_0_5"/>
<dbReference type="Proteomes" id="UP000000540">
    <property type="component" value="Chromosome I"/>
</dbReference>
<dbReference type="GO" id="GO:0015935">
    <property type="term" value="C:small ribosomal subunit"/>
    <property type="evidence" value="ECO:0007669"/>
    <property type="project" value="TreeGrafter"/>
</dbReference>
<dbReference type="GO" id="GO:0070181">
    <property type="term" value="F:small ribosomal subunit rRNA binding"/>
    <property type="evidence" value="ECO:0007669"/>
    <property type="project" value="TreeGrafter"/>
</dbReference>
<dbReference type="GO" id="GO:0003735">
    <property type="term" value="F:structural constituent of ribosome"/>
    <property type="evidence" value="ECO:0007669"/>
    <property type="project" value="InterPro"/>
</dbReference>
<dbReference type="GO" id="GO:0006412">
    <property type="term" value="P:translation"/>
    <property type="evidence" value="ECO:0007669"/>
    <property type="project" value="UniProtKB-UniRule"/>
</dbReference>
<dbReference type="FunFam" id="1.20.58.110:FF:000001">
    <property type="entry name" value="30S ribosomal protein S20"/>
    <property type="match status" value="1"/>
</dbReference>
<dbReference type="Gene3D" id="1.20.58.110">
    <property type="entry name" value="Ribosomal protein S20"/>
    <property type="match status" value="1"/>
</dbReference>
<dbReference type="HAMAP" id="MF_00500">
    <property type="entry name" value="Ribosomal_bS20"/>
    <property type="match status" value="1"/>
</dbReference>
<dbReference type="InterPro" id="IPR002583">
    <property type="entry name" value="Ribosomal_bS20"/>
</dbReference>
<dbReference type="InterPro" id="IPR036510">
    <property type="entry name" value="Ribosomal_bS20_sf"/>
</dbReference>
<dbReference type="NCBIfam" id="TIGR00029">
    <property type="entry name" value="S20"/>
    <property type="match status" value="1"/>
</dbReference>
<dbReference type="PANTHER" id="PTHR33398">
    <property type="entry name" value="30S RIBOSOMAL PROTEIN S20"/>
    <property type="match status" value="1"/>
</dbReference>
<dbReference type="PANTHER" id="PTHR33398:SF1">
    <property type="entry name" value="SMALL RIBOSOMAL SUBUNIT PROTEIN BS20C"/>
    <property type="match status" value="1"/>
</dbReference>
<dbReference type="Pfam" id="PF01649">
    <property type="entry name" value="Ribosomal_S20p"/>
    <property type="match status" value="1"/>
</dbReference>
<dbReference type="SUPFAM" id="SSF46992">
    <property type="entry name" value="Ribosomal protein S20"/>
    <property type="match status" value="1"/>
</dbReference>
<reference key="1">
    <citation type="journal article" date="2005" name="J. Bacteriol.">
        <title>Completion of the genome sequence of Brucella abortus and comparison to the highly similar genomes of Brucella melitensis and Brucella suis.</title>
        <authorList>
            <person name="Halling S.M."/>
            <person name="Peterson-Burch B.D."/>
            <person name="Bricker B.J."/>
            <person name="Zuerner R.L."/>
            <person name="Qing Z."/>
            <person name="Li L.-L."/>
            <person name="Kapur V."/>
            <person name="Alt D.P."/>
            <person name="Olsen S.C."/>
        </authorList>
    </citation>
    <scope>NUCLEOTIDE SEQUENCE [LARGE SCALE GENOMIC DNA]</scope>
    <source>
        <strain>9-941</strain>
    </source>
</reference>
<name>RS20_BRUAB</name>
<accession>Q57A81</accession>
<keyword id="KW-0687">Ribonucleoprotein</keyword>
<keyword id="KW-0689">Ribosomal protein</keyword>
<keyword id="KW-0694">RNA-binding</keyword>
<keyword id="KW-0699">rRNA-binding</keyword>
<protein>
    <recommendedName>
        <fullName evidence="1">Small ribosomal subunit protein bS20</fullName>
    </recommendedName>
    <alternativeName>
        <fullName evidence="2">30S ribosomal protein S20</fullName>
    </alternativeName>
</protein>
<feature type="chain" id="PRO_0000236425" description="Small ribosomal subunit protein bS20">
    <location>
        <begin position="1"/>
        <end position="88"/>
    </location>
</feature>